<reference key="1">
    <citation type="journal article" date="2003" name="Nucleic Acids Res.">
        <title>The complete genome sequence and analysis of Corynebacterium diphtheriae NCTC13129.</title>
        <authorList>
            <person name="Cerdeno-Tarraga A.-M."/>
            <person name="Efstratiou A."/>
            <person name="Dover L.G."/>
            <person name="Holden M.T.G."/>
            <person name="Pallen M.J."/>
            <person name="Bentley S.D."/>
            <person name="Besra G.S."/>
            <person name="Churcher C.M."/>
            <person name="James K.D."/>
            <person name="De Zoysa A."/>
            <person name="Chillingworth T."/>
            <person name="Cronin A."/>
            <person name="Dowd L."/>
            <person name="Feltwell T."/>
            <person name="Hamlin N."/>
            <person name="Holroyd S."/>
            <person name="Jagels K."/>
            <person name="Moule S."/>
            <person name="Quail M.A."/>
            <person name="Rabbinowitsch E."/>
            <person name="Rutherford K.M."/>
            <person name="Thomson N.R."/>
            <person name="Unwin L."/>
            <person name="Whitehead S."/>
            <person name="Barrell B.G."/>
            <person name="Parkhill J."/>
        </authorList>
    </citation>
    <scope>NUCLEOTIDE SEQUENCE [LARGE SCALE GENOMIC DNA]</scope>
    <source>
        <strain>ATCC 700971 / NCTC 13129 / Biotype gravis</strain>
    </source>
</reference>
<evidence type="ECO:0000255" key="1">
    <source>
        <dbReference type="HAMAP-Rule" id="MF_00081"/>
    </source>
</evidence>
<proteinExistence type="inferred from homology"/>
<comment type="function">
    <text evidence="1">Negative regulator of class I heat shock genes (grpE-dnaK-dnaJ and groELS operons). Prevents heat-shock induction of these operons.</text>
</comment>
<comment type="similarity">
    <text evidence="1">Belongs to the HrcA family.</text>
</comment>
<organism>
    <name type="scientific">Corynebacterium diphtheriae (strain ATCC 700971 / NCTC 13129 / Biotype gravis)</name>
    <dbReference type="NCBI Taxonomy" id="257309"/>
    <lineage>
        <taxon>Bacteria</taxon>
        <taxon>Bacillati</taxon>
        <taxon>Actinomycetota</taxon>
        <taxon>Actinomycetes</taxon>
        <taxon>Mycobacteriales</taxon>
        <taxon>Corynebacteriaceae</taxon>
        <taxon>Corynebacterium</taxon>
    </lineage>
</organism>
<dbReference type="EMBL" id="BX248359">
    <property type="protein sequence ID" value="CAE50250.1"/>
    <property type="molecule type" value="Genomic_DNA"/>
</dbReference>
<dbReference type="RefSeq" id="WP_003852342.1">
    <property type="nucleotide sequence ID" value="NC_002935.2"/>
</dbReference>
<dbReference type="SMR" id="Q6NG13"/>
<dbReference type="STRING" id="257309.DIP1721"/>
<dbReference type="DNASU" id="2650314"/>
<dbReference type="KEGG" id="cdi:DIP1721"/>
<dbReference type="HOGENOM" id="CLU_050019_2_0_11"/>
<dbReference type="Proteomes" id="UP000002198">
    <property type="component" value="Chromosome"/>
</dbReference>
<dbReference type="GO" id="GO:0003677">
    <property type="term" value="F:DNA binding"/>
    <property type="evidence" value="ECO:0007669"/>
    <property type="project" value="InterPro"/>
</dbReference>
<dbReference type="GO" id="GO:0045892">
    <property type="term" value="P:negative regulation of DNA-templated transcription"/>
    <property type="evidence" value="ECO:0007669"/>
    <property type="project" value="UniProtKB-UniRule"/>
</dbReference>
<dbReference type="FunFam" id="1.10.10.10:FF:000049">
    <property type="entry name" value="Heat-inducible transcription repressor HrcA"/>
    <property type="match status" value="1"/>
</dbReference>
<dbReference type="Gene3D" id="3.30.450.40">
    <property type="match status" value="1"/>
</dbReference>
<dbReference type="Gene3D" id="3.30.390.60">
    <property type="entry name" value="Heat-inducible transcription repressor hrca homolog, domain 3"/>
    <property type="match status" value="1"/>
</dbReference>
<dbReference type="Gene3D" id="1.10.10.10">
    <property type="entry name" value="Winged helix-like DNA-binding domain superfamily/Winged helix DNA-binding domain"/>
    <property type="match status" value="1"/>
</dbReference>
<dbReference type="HAMAP" id="MF_00081">
    <property type="entry name" value="HrcA"/>
    <property type="match status" value="1"/>
</dbReference>
<dbReference type="InterPro" id="IPR029016">
    <property type="entry name" value="GAF-like_dom_sf"/>
</dbReference>
<dbReference type="InterPro" id="IPR002571">
    <property type="entry name" value="HrcA"/>
</dbReference>
<dbReference type="InterPro" id="IPR021153">
    <property type="entry name" value="HrcA_C"/>
</dbReference>
<dbReference type="InterPro" id="IPR036388">
    <property type="entry name" value="WH-like_DNA-bd_sf"/>
</dbReference>
<dbReference type="InterPro" id="IPR036390">
    <property type="entry name" value="WH_DNA-bd_sf"/>
</dbReference>
<dbReference type="InterPro" id="IPR023120">
    <property type="entry name" value="WHTH_transcript_rep_HrcA_IDD"/>
</dbReference>
<dbReference type="NCBIfam" id="TIGR00331">
    <property type="entry name" value="hrcA"/>
    <property type="match status" value="1"/>
</dbReference>
<dbReference type="PANTHER" id="PTHR34824">
    <property type="entry name" value="HEAT-INDUCIBLE TRANSCRIPTION REPRESSOR HRCA"/>
    <property type="match status" value="1"/>
</dbReference>
<dbReference type="PANTHER" id="PTHR34824:SF1">
    <property type="entry name" value="HEAT-INDUCIBLE TRANSCRIPTION REPRESSOR HRCA"/>
    <property type="match status" value="1"/>
</dbReference>
<dbReference type="Pfam" id="PF01628">
    <property type="entry name" value="HrcA"/>
    <property type="match status" value="1"/>
</dbReference>
<dbReference type="PIRSF" id="PIRSF005485">
    <property type="entry name" value="HrcA"/>
    <property type="match status" value="1"/>
</dbReference>
<dbReference type="SUPFAM" id="SSF55781">
    <property type="entry name" value="GAF domain-like"/>
    <property type="match status" value="1"/>
</dbReference>
<dbReference type="SUPFAM" id="SSF46785">
    <property type="entry name" value="Winged helix' DNA-binding domain"/>
    <property type="match status" value="1"/>
</dbReference>
<keyword id="KW-1185">Reference proteome</keyword>
<keyword id="KW-0678">Repressor</keyword>
<keyword id="KW-0346">Stress response</keyword>
<keyword id="KW-0804">Transcription</keyword>
<keyword id="KW-0805">Transcription regulation</keyword>
<sequence length="345" mass="37527">MAGATDQRRQEVLRAIVADYIASQEPVGSKALLERHNLKVSSATIRNDMAVLESEGYIVQQHASSGRIPTEKAYRTFVDSINDIKPLSVAERRAILGFLERGVDLEDVLKRSVQLLSQLTRQAAVIQLPNLNVSRVKHCEVVLLSPVRLLLVLITDNGRVEQRNVEVDQICEPEHVAKMRDVLNRALDNKTLSDASASLAELAAGEILVDPDIQPMILRCATVLIETLVEQPNDRLILAGASNLTHIAREMPSSLPAMLEALEEQVVVLKLLTNVRDLGHVSVLIGEENEDEQLRGTSVVTTGYGAQGATLGGLGVVGPTFMDYSGTMSKVYAVAHYVSRVLSGG</sequence>
<feature type="chain" id="PRO_0000182474" description="Heat-inducible transcription repressor HrcA">
    <location>
        <begin position="1"/>
        <end position="345"/>
    </location>
</feature>
<protein>
    <recommendedName>
        <fullName evidence="1">Heat-inducible transcription repressor HrcA</fullName>
    </recommendedName>
</protein>
<name>HRCA_CORDI</name>
<gene>
    <name evidence="1" type="primary">hrcA</name>
    <name type="ordered locus">DIP1721</name>
</gene>
<accession>Q6NG13</accession>